<accession>B1AJ08</accession>
<gene>
    <name evidence="1" type="primary">alaS</name>
    <name type="ordered locus">UPA3_0385</name>
</gene>
<feature type="chain" id="PRO_0000347857" description="Alanine--tRNA ligase">
    <location>
        <begin position="1"/>
        <end position="906"/>
    </location>
</feature>
<feature type="binding site" evidence="1">
    <location>
        <position position="570"/>
    </location>
    <ligand>
        <name>Zn(2+)</name>
        <dbReference type="ChEBI" id="CHEBI:29105"/>
    </ligand>
</feature>
<feature type="binding site" evidence="1">
    <location>
        <position position="574"/>
    </location>
    <ligand>
        <name>Zn(2+)</name>
        <dbReference type="ChEBI" id="CHEBI:29105"/>
    </ligand>
</feature>
<feature type="binding site" evidence="1">
    <location>
        <position position="674"/>
    </location>
    <ligand>
        <name>Zn(2+)</name>
        <dbReference type="ChEBI" id="CHEBI:29105"/>
    </ligand>
</feature>
<feature type="binding site" evidence="1">
    <location>
        <position position="678"/>
    </location>
    <ligand>
        <name>Zn(2+)</name>
        <dbReference type="ChEBI" id="CHEBI:29105"/>
    </ligand>
</feature>
<protein>
    <recommendedName>
        <fullName evidence="1">Alanine--tRNA ligase</fullName>
        <ecNumber evidence="1">6.1.1.7</ecNumber>
    </recommendedName>
    <alternativeName>
        <fullName evidence="1">Alanyl-tRNA synthetase</fullName>
        <shortName evidence="1">AlaRS</shortName>
    </alternativeName>
</protein>
<keyword id="KW-0030">Aminoacyl-tRNA synthetase</keyword>
<keyword id="KW-0067">ATP-binding</keyword>
<keyword id="KW-0963">Cytoplasm</keyword>
<keyword id="KW-0436">Ligase</keyword>
<keyword id="KW-0479">Metal-binding</keyword>
<keyword id="KW-0547">Nucleotide-binding</keyword>
<keyword id="KW-0648">Protein biosynthesis</keyword>
<keyword id="KW-0694">RNA-binding</keyword>
<keyword id="KW-0820">tRNA-binding</keyword>
<keyword id="KW-0862">Zinc</keyword>
<organism>
    <name type="scientific">Ureaplasma parvum serovar 3 (strain ATCC 27815 / 27 / NCTC 11736)</name>
    <dbReference type="NCBI Taxonomy" id="505682"/>
    <lineage>
        <taxon>Bacteria</taxon>
        <taxon>Bacillati</taxon>
        <taxon>Mycoplasmatota</taxon>
        <taxon>Mycoplasmoidales</taxon>
        <taxon>Mycoplasmoidaceae</taxon>
        <taxon>Ureaplasma</taxon>
    </lineage>
</organism>
<evidence type="ECO:0000255" key="1">
    <source>
        <dbReference type="HAMAP-Rule" id="MF_00036"/>
    </source>
</evidence>
<proteinExistence type="inferred from homology"/>
<sequence length="906" mass="105191">MLKLSTNEIRKKWIEFFESKDHLFIEPKSLIPKNDPTLLWINSGVSTLKDYFSGKVKPPHKRLVNSQKAIRTNDIFNVGLTSRHHTFFEMLGNFSIGDYFKKEAIDWAYEFLINVLKIDVKKLWVTVFEDDQFTNDEWIKLGIIKEQIIKCNRDRNFWDVGNGPCGPCTEIHYDRGERFDPNKIGSKLILEDIENDRYVEIWNIVFSQFNNDGHNNYTELLQKNIDTGAGLERIACISQDVPTNFDSDVFMRITKSVEQFSEYKYDMNEYFHPNVTQNKINFAYKVIADHMRATVFAIADGAIPSNKERGYILRRLIRRTMVLVRRLNINNLLWVDAVVDAIASTMGDFYTYLKDEKTLTKIKMILNKEVQLFEKTLQLGLNIFENSIRNQELDKEITFKLVDTYGFPIELIKEICEQRNVKVDLEAFDAMFKHHQLISKANKANLKVMESQNESLMQLDVDSTFHYEIFRWENAKIITLFNEDFELVDGLDHEDGYVVFDNTCFYATSGGQQHDTGYIIKNDQQFFVDDVFKAPNRQHVHHVKNASLSMNEHVILQINEQDRKSITANHTAEHLLHYCLKHVLSPDIKQEGAAKYPHKVTFDFTYHAQPTKAQLDKLENVLNEMVQSNFDVQELHMDLDEAKAVGAAAYFEDVYKKLKGKLRVIKMGPSIELCGGTHAHHTSEIERIKIVECASKGAGSWRITMVTGHDNLAKYIHDLYVDYLNEINHLKVNLDINDHKLNDLYNAFANWKNLSIDDYDLLNEKFAELKQSLINFKIEFDKQNAKQAIIDIKNTFNTQLTNKRVHVFKNTDNKNIFNALNELINENQDTLFISFNLDDNKIQYLLAINEKFATTNQINLNKYIKELNTISNGKGGGKPYFVQGGTSEQEKLDELLTVVDKWVINA</sequence>
<reference key="1">
    <citation type="submission" date="2008-02" db="EMBL/GenBank/DDBJ databases">
        <title>Genome sequence of Ureaplasma parvum serovar 3.</title>
        <authorList>
            <person name="Methe B.A."/>
            <person name="Glass J."/>
            <person name="Waites K."/>
            <person name="Shrivastava S."/>
        </authorList>
    </citation>
    <scope>NUCLEOTIDE SEQUENCE [LARGE SCALE GENOMIC DNA]</scope>
    <source>
        <strain>ATCC 27815 / 27 / NCTC 11736</strain>
    </source>
</reference>
<dbReference type="EC" id="6.1.1.7" evidence="1"/>
<dbReference type="EMBL" id="CP000942">
    <property type="protein sequence ID" value="ACA33098.1"/>
    <property type="molecule type" value="Genomic_DNA"/>
</dbReference>
<dbReference type="RefSeq" id="WP_006689116.1">
    <property type="nucleotide sequence ID" value="NC_010503.1"/>
</dbReference>
<dbReference type="SMR" id="B1AJ08"/>
<dbReference type="GeneID" id="29672461"/>
<dbReference type="KEGG" id="upa:UPA3_0385"/>
<dbReference type="HOGENOM" id="CLU_004485_1_1_14"/>
<dbReference type="Proteomes" id="UP000002162">
    <property type="component" value="Chromosome"/>
</dbReference>
<dbReference type="GO" id="GO:0005829">
    <property type="term" value="C:cytosol"/>
    <property type="evidence" value="ECO:0007669"/>
    <property type="project" value="TreeGrafter"/>
</dbReference>
<dbReference type="GO" id="GO:0004813">
    <property type="term" value="F:alanine-tRNA ligase activity"/>
    <property type="evidence" value="ECO:0007669"/>
    <property type="project" value="UniProtKB-UniRule"/>
</dbReference>
<dbReference type="GO" id="GO:0002161">
    <property type="term" value="F:aminoacyl-tRNA deacylase activity"/>
    <property type="evidence" value="ECO:0007669"/>
    <property type="project" value="TreeGrafter"/>
</dbReference>
<dbReference type="GO" id="GO:0005524">
    <property type="term" value="F:ATP binding"/>
    <property type="evidence" value="ECO:0007669"/>
    <property type="project" value="UniProtKB-UniRule"/>
</dbReference>
<dbReference type="GO" id="GO:0000049">
    <property type="term" value="F:tRNA binding"/>
    <property type="evidence" value="ECO:0007669"/>
    <property type="project" value="UniProtKB-KW"/>
</dbReference>
<dbReference type="GO" id="GO:0008270">
    <property type="term" value="F:zinc ion binding"/>
    <property type="evidence" value="ECO:0007669"/>
    <property type="project" value="UniProtKB-UniRule"/>
</dbReference>
<dbReference type="GO" id="GO:0006419">
    <property type="term" value="P:alanyl-tRNA aminoacylation"/>
    <property type="evidence" value="ECO:0007669"/>
    <property type="project" value="UniProtKB-UniRule"/>
</dbReference>
<dbReference type="CDD" id="cd00673">
    <property type="entry name" value="AlaRS_core"/>
    <property type="match status" value="1"/>
</dbReference>
<dbReference type="FunFam" id="3.30.930.10:FF:000046">
    <property type="entry name" value="Alanine--tRNA ligase"/>
    <property type="match status" value="1"/>
</dbReference>
<dbReference type="FunFam" id="3.30.980.10:FF:000004">
    <property type="entry name" value="Alanine--tRNA ligase, cytoplasmic"/>
    <property type="match status" value="1"/>
</dbReference>
<dbReference type="Gene3D" id="2.40.30.130">
    <property type="match status" value="1"/>
</dbReference>
<dbReference type="Gene3D" id="3.10.310.40">
    <property type="match status" value="1"/>
</dbReference>
<dbReference type="Gene3D" id="3.30.54.20">
    <property type="match status" value="1"/>
</dbReference>
<dbReference type="Gene3D" id="3.30.930.10">
    <property type="entry name" value="Bira Bifunctional Protein, Domain 2"/>
    <property type="match status" value="1"/>
</dbReference>
<dbReference type="Gene3D" id="3.30.980.10">
    <property type="entry name" value="Threonyl-trna Synthetase, Chain A, domain 2"/>
    <property type="match status" value="1"/>
</dbReference>
<dbReference type="HAMAP" id="MF_00036_B">
    <property type="entry name" value="Ala_tRNA_synth_B"/>
    <property type="match status" value="1"/>
</dbReference>
<dbReference type="InterPro" id="IPR045864">
    <property type="entry name" value="aa-tRNA-synth_II/BPL/LPL"/>
</dbReference>
<dbReference type="InterPro" id="IPR002318">
    <property type="entry name" value="Ala-tRNA-lgiase_IIc"/>
</dbReference>
<dbReference type="InterPro" id="IPR018162">
    <property type="entry name" value="Ala-tRNA-ligase_IIc_anticod-bd"/>
</dbReference>
<dbReference type="InterPro" id="IPR018165">
    <property type="entry name" value="Ala-tRNA-synth_IIc_core"/>
</dbReference>
<dbReference type="InterPro" id="IPR018164">
    <property type="entry name" value="Ala-tRNA-synth_IIc_N"/>
</dbReference>
<dbReference type="InterPro" id="IPR050058">
    <property type="entry name" value="Ala-tRNA_ligase"/>
</dbReference>
<dbReference type="InterPro" id="IPR023033">
    <property type="entry name" value="Ala_tRNA_ligase_euk/bac"/>
</dbReference>
<dbReference type="InterPro" id="IPR003156">
    <property type="entry name" value="DHHA1_dom"/>
</dbReference>
<dbReference type="InterPro" id="IPR018163">
    <property type="entry name" value="Thr/Ala-tRNA-synth_IIc_edit"/>
</dbReference>
<dbReference type="InterPro" id="IPR009000">
    <property type="entry name" value="Transl_B-barrel_sf"/>
</dbReference>
<dbReference type="InterPro" id="IPR012947">
    <property type="entry name" value="tRNA_SAD"/>
</dbReference>
<dbReference type="NCBIfam" id="TIGR00344">
    <property type="entry name" value="alaS"/>
    <property type="match status" value="1"/>
</dbReference>
<dbReference type="PANTHER" id="PTHR11777:SF9">
    <property type="entry name" value="ALANINE--TRNA LIGASE, CYTOPLASMIC"/>
    <property type="match status" value="1"/>
</dbReference>
<dbReference type="PANTHER" id="PTHR11777">
    <property type="entry name" value="ALANYL-TRNA SYNTHETASE"/>
    <property type="match status" value="1"/>
</dbReference>
<dbReference type="Pfam" id="PF02272">
    <property type="entry name" value="DHHA1"/>
    <property type="match status" value="1"/>
</dbReference>
<dbReference type="Pfam" id="PF01411">
    <property type="entry name" value="tRNA-synt_2c"/>
    <property type="match status" value="1"/>
</dbReference>
<dbReference type="Pfam" id="PF07973">
    <property type="entry name" value="tRNA_SAD"/>
    <property type="match status" value="1"/>
</dbReference>
<dbReference type="PRINTS" id="PR00980">
    <property type="entry name" value="TRNASYNTHALA"/>
</dbReference>
<dbReference type="SMART" id="SM00863">
    <property type="entry name" value="tRNA_SAD"/>
    <property type="match status" value="1"/>
</dbReference>
<dbReference type="SUPFAM" id="SSF55681">
    <property type="entry name" value="Class II aaRS and biotin synthetases"/>
    <property type="match status" value="1"/>
</dbReference>
<dbReference type="SUPFAM" id="SSF101353">
    <property type="entry name" value="Putative anticodon-binding domain of alanyl-tRNA synthetase (AlaRS)"/>
    <property type="match status" value="1"/>
</dbReference>
<dbReference type="SUPFAM" id="SSF55186">
    <property type="entry name" value="ThrRS/AlaRS common domain"/>
    <property type="match status" value="1"/>
</dbReference>
<dbReference type="SUPFAM" id="SSF50447">
    <property type="entry name" value="Translation proteins"/>
    <property type="match status" value="1"/>
</dbReference>
<dbReference type="PROSITE" id="PS50860">
    <property type="entry name" value="AA_TRNA_LIGASE_II_ALA"/>
    <property type="match status" value="1"/>
</dbReference>
<name>SYA_UREP2</name>
<comment type="function">
    <text evidence="1">Catalyzes the attachment of alanine to tRNA(Ala) in a two-step reaction: alanine is first activated by ATP to form Ala-AMP and then transferred to the acceptor end of tRNA(Ala). Also edits incorrectly charged Ser-tRNA(Ala) and Gly-tRNA(Ala) via its editing domain.</text>
</comment>
<comment type="catalytic activity">
    <reaction evidence="1">
        <text>tRNA(Ala) + L-alanine + ATP = L-alanyl-tRNA(Ala) + AMP + diphosphate</text>
        <dbReference type="Rhea" id="RHEA:12540"/>
        <dbReference type="Rhea" id="RHEA-COMP:9657"/>
        <dbReference type="Rhea" id="RHEA-COMP:9923"/>
        <dbReference type="ChEBI" id="CHEBI:30616"/>
        <dbReference type="ChEBI" id="CHEBI:33019"/>
        <dbReference type="ChEBI" id="CHEBI:57972"/>
        <dbReference type="ChEBI" id="CHEBI:78442"/>
        <dbReference type="ChEBI" id="CHEBI:78497"/>
        <dbReference type="ChEBI" id="CHEBI:456215"/>
        <dbReference type="EC" id="6.1.1.7"/>
    </reaction>
</comment>
<comment type="cofactor">
    <cofactor evidence="1">
        <name>Zn(2+)</name>
        <dbReference type="ChEBI" id="CHEBI:29105"/>
    </cofactor>
    <text evidence="1">Binds 1 zinc ion per subunit.</text>
</comment>
<comment type="subcellular location">
    <subcellularLocation>
        <location evidence="1">Cytoplasm</location>
    </subcellularLocation>
</comment>
<comment type="domain">
    <text evidence="1">Consists of three domains; the N-terminal catalytic domain, the editing domain and the C-terminal C-Ala domain. The editing domain removes incorrectly charged amino acids, while the C-Ala domain, along with tRNA(Ala), serves as a bridge to cooperatively bring together the editing and aminoacylation centers thus stimulating deacylation of misacylated tRNAs.</text>
</comment>
<comment type="similarity">
    <text evidence="1">Belongs to the class-II aminoacyl-tRNA synthetase family.</text>
</comment>